<gene>
    <name evidence="1" type="primary">cyoE</name>
    <name type="ordered locus">ACIAD2429</name>
</gene>
<reference key="1">
    <citation type="journal article" date="2004" name="Nucleic Acids Res.">
        <title>Unique features revealed by the genome sequence of Acinetobacter sp. ADP1, a versatile and naturally transformation competent bacterium.</title>
        <authorList>
            <person name="Barbe V."/>
            <person name="Vallenet D."/>
            <person name="Fonknechten N."/>
            <person name="Kreimeyer A."/>
            <person name="Oztas S."/>
            <person name="Labarre L."/>
            <person name="Cruveiller S."/>
            <person name="Robert C."/>
            <person name="Duprat S."/>
            <person name="Wincker P."/>
            <person name="Ornston L.N."/>
            <person name="Weissenbach J."/>
            <person name="Marliere P."/>
            <person name="Cohen G.N."/>
            <person name="Medigue C."/>
        </authorList>
    </citation>
    <scope>NUCLEOTIDE SEQUENCE [LARGE SCALE GENOMIC DNA]</scope>
    <source>
        <strain>ATCC 33305 / BD413 / ADP1</strain>
    </source>
</reference>
<name>CYOE_ACIAD</name>
<accession>Q6F9R1</accession>
<comment type="function">
    <text evidence="1">Converts heme B (protoheme IX) to heme O by substitution of the vinyl group on carbon 2 of heme B porphyrin ring with a hydroxyethyl farnesyl side group.</text>
</comment>
<comment type="catalytic activity">
    <reaction evidence="1">
        <text>heme b + (2E,6E)-farnesyl diphosphate + H2O = Fe(II)-heme o + diphosphate</text>
        <dbReference type="Rhea" id="RHEA:28070"/>
        <dbReference type="ChEBI" id="CHEBI:15377"/>
        <dbReference type="ChEBI" id="CHEBI:33019"/>
        <dbReference type="ChEBI" id="CHEBI:60344"/>
        <dbReference type="ChEBI" id="CHEBI:60530"/>
        <dbReference type="ChEBI" id="CHEBI:175763"/>
        <dbReference type="EC" id="2.5.1.141"/>
    </reaction>
</comment>
<comment type="pathway">
    <text evidence="1">Porphyrin-containing compound metabolism; heme O biosynthesis; heme O from protoheme: step 1/1.</text>
</comment>
<comment type="subcellular location">
    <subcellularLocation>
        <location evidence="1">Cell inner membrane</location>
        <topology evidence="1">Multi-pass membrane protein</topology>
    </subcellularLocation>
</comment>
<comment type="miscellaneous">
    <text evidence="1">Carbon 2 of the heme B porphyrin ring is defined according to the Fischer nomenclature.</text>
</comment>
<comment type="similarity">
    <text evidence="1">Belongs to the UbiA prenyltransferase family. Protoheme IX farnesyltransferase subfamily.</text>
</comment>
<comment type="sequence caution" evidence="2">
    <conflict type="erroneous initiation">
        <sequence resource="EMBL-CDS" id="CAG69202"/>
    </conflict>
</comment>
<proteinExistence type="inferred from homology"/>
<feature type="chain" id="PRO_0000326878" description="Protoheme IX farnesyltransferase">
    <location>
        <begin position="1"/>
        <end position="292"/>
    </location>
</feature>
<feature type="transmembrane region" description="Helical" evidence="1">
    <location>
        <begin position="13"/>
        <end position="33"/>
    </location>
</feature>
<feature type="transmembrane region" description="Helical" evidence="1">
    <location>
        <begin position="35"/>
        <end position="55"/>
    </location>
</feature>
<feature type="transmembrane region" description="Helical" evidence="1">
    <location>
        <begin position="84"/>
        <end position="104"/>
    </location>
</feature>
<feature type="transmembrane region" description="Helical" evidence="1">
    <location>
        <begin position="106"/>
        <end position="126"/>
    </location>
</feature>
<feature type="transmembrane region" description="Helical" evidence="1">
    <location>
        <begin position="135"/>
        <end position="155"/>
    </location>
</feature>
<feature type="transmembrane region" description="Helical" evidence="1">
    <location>
        <begin position="161"/>
        <end position="181"/>
    </location>
</feature>
<feature type="transmembrane region" description="Helical" evidence="1">
    <location>
        <begin position="206"/>
        <end position="226"/>
    </location>
</feature>
<feature type="transmembrane region" description="Helical" evidence="1">
    <location>
        <begin position="231"/>
        <end position="251"/>
    </location>
</feature>
<feature type="transmembrane region" description="Helical" evidence="1">
    <location>
        <begin position="263"/>
        <end position="283"/>
    </location>
</feature>
<organism>
    <name type="scientific">Acinetobacter baylyi (strain ATCC 33305 / BD413 / ADP1)</name>
    <dbReference type="NCBI Taxonomy" id="62977"/>
    <lineage>
        <taxon>Bacteria</taxon>
        <taxon>Pseudomonadati</taxon>
        <taxon>Pseudomonadota</taxon>
        <taxon>Gammaproteobacteria</taxon>
        <taxon>Moraxellales</taxon>
        <taxon>Moraxellaceae</taxon>
        <taxon>Acinetobacter</taxon>
    </lineage>
</organism>
<dbReference type="EC" id="2.5.1.141" evidence="1"/>
<dbReference type="EMBL" id="CR543861">
    <property type="protein sequence ID" value="CAG69202.1"/>
    <property type="status" value="ALT_INIT"/>
    <property type="molecule type" value="Genomic_DNA"/>
</dbReference>
<dbReference type="RefSeq" id="WP_004928367.1">
    <property type="nucleotide sequence ID" value="NC_005966.1"/>
</dbReference>
<dbReference type="SMR" id="Q6F9R1"/>
<dbReference type="STRING" id="202950.GCA_001485005_01564"/>
<dbReference type="GeneID" id="45234738"/>
<dbReference type="KEGG" id="aci:ACIAD2429"/>
<dbReference type="eggNOG" id="COG0109">
    <property type="taxonomic scope" value="Bacteria"/>
</dbReference>
<dbReference type="HOGENOM" id="CLU_029631_0_0_6"/>
<dbReference type="OrthoDB" id="9814417at2"/>
<dbReference type="BioCyc" id="ASP62977:ACIAD_RS11105-MONOMER"/>
<dbReference type="UniPathway" id="UPA00834">
    <property type="reaction ID" value="UER00712"/>
</dbReference>
<dbReference type="Proteomes" id="UP000000430">
    <property type="component" value="Chromosome"/>
</dbReference>
<dbReference type="GO" id="GO:0005886">
    <property type="term" value="C:plasma membrane"/>
    <property type="evidence" value="ECO:0007669"/>
    <property type="project" value="UniProtKB-SubCell"/>
</dbReference>
<dbReference type="GO" id="GO:0008495">
    <property type="term" value="F:protoheme IX farnesyltransferase activity"/>
    <property type="evidence" value="ECO:0007669"/>
    <property type="project" value="UniProtKB-UniRule"/>
</dbReference>
<dbReference type="GO" id="GO:0048034">
    <property type="term" value="P:heme O biosynthetic process"/>
    <property type="evidence" value="ECO:0007669"/>
    <property type="project" value="UniProtKB-UniRule"/>
</dbReference>
<dbReference type="CDD" id="cd13957">
    <property type="entry name" value="PT_UbiA_Cox10"/>
    <property type="match status" value="1"/>
</dbReference>
<dbReference type="FunFam" id="1.10.357.140:FF:000001">
    <property type="entry name" value="Protoheme IX farnesyltransferase"/>
    <property type="match status" value="1"/>
</dbReference>
<dbReference type="Gene3D" id="1.10.357.140">
    <property type="entry name" value="UbiA prenyltransferase"/>
    <property type="match status" value="1"/>
</dbReference>
<dbReference type="HAMAP" id="MF_00154">
    <property type="entry name" value="CyoE_CtaB"/>
    <property type="match status" value="1"/>
</dbReference>
<dbReference type="InterPro" id="IPR006369">
    <property type="entry name" value="Protohaem_IX_farnesylTrfase"/>
</dbReference>
<dbReference type="InterPro" id="IPR000537">
    <property type="entry name" value="UbiA_prenyltransferase"/>
</dbReference>
<dbReference type="InterPro" id="IPR030470">
    <property type="entry name" value="UbiA_prenylTrfase_CS"/>
</dbReference>
<dbReference type="InterPro" id="IPR044878">
    <property type="entry name" value="UbiA_sf"/>
</dbReference>
<dbReference type="NCBIfam" id="TIGR01473">
    <property type="entry name" value="cyoE_ctaB"/>
    <property type="match status" value="1"/>
</dbReference>
<dbReference type="NCBIfam" id="NF003348">
    <property type="entry name" value="PRK04375.1-1"/>
    <property type="match status" value="1"/>
</dbReference>
<dbReference type="PANTHER" id="PTHR43448">
    <property type="entry name" value="PROTOHEME IX FARNESYLTRANSFERASE, MITOCHONDRIAL"/>
    <property type="match status" value="1"/>
</dbReference>
<dbReference type="PANTHER" id="PTHR43448:SF2">
    <property type="entry name" value="PROTOHEME IX FARNESYLTRANSFERASE, MITOCHONDRIAL"/>
    <property type="match status" value="1"/>
</dbReference>
<dbReference type="Pfam" id="PF01040">
    <property type="entry name" value="UbiA"/>
    <property type="match status" value="1"/>
</dbReference>
<dbReference type="PROSITE" id="PS00943">
    <property type="entry name" value="UBIA"/>
    <property type="match status" value="1"/>
</dbReference>
<protein>
    <recommendedName>
        <fullName evidence="1">Protoheme IX farnesyltransferase</fullName>
        <ecNumber evidence="1">2.5.1.141</ecNumber>
    </recommendedName>
    <alternativeName>
        <fullName evidence="1">Heme B farnesyltransferase</fullName>
    </alternativeName>
    <alternativeName>
        <fullName evidence="1">Heme O synthase</fullName>
    </alternativeName>
</protein>
<evidence type="ECO:0000255" key="1">
    <source>
        <dbReference type="HAMAP-Rule" id="MF_00154"/>
    </source>
</evidence>
<evidence type="ECO:0000305" key="2"/>
<keyword id="KW-0997">Cell inner membrane</keyword>
<keyword id="KW-1003">Cell membrane</keyword>
<keyword id="KW-0350">Heme biosynthesis</keyword>
<keyword id="KW-0472">Membrane</keyword>
<keyword id="KW-0808">Transferase</keyword>
<keyword id="KW-0812">Transmembrane</keyword>
<keyword id="KW-1133">Transmembrane helix</keyword>
<sequence length="292" mass="32846">MLKKYLFLTKPGILFGNFITTLGGFFLAAQGHVDFLLLILTLLGTTFVVASGCVVNNVIDQDIDQKMERTQNRALVKKTVSPSTALIFAFILGIIGFGILWFWVNPYSFSFAIIGFVVYVGFYSLWTKRTSIHQTIIGSISGASPPVIGYTAVTHQFDVAALLIFLAYGLWQMPHSWAIAIYRFDDYKNAGIPILPVARSVYRTKVECLIYIVLFAAVLNGLYCFGYTNVFFLLTFNVLTAYWLYLSIIGFKAENDQLWAKRLFLFSVILITLLSLSFSFTYQSPAPNLPLF</sequence>